<reference key="1">
    <citation type="journal article" date="2001" name="Proc. Natl. Acad. Sci. U.S.A.">
        <title>Complete genome sequence of Caulobacter crescentus.</title>
        <authorList>
            <person name="Nierman W.C."/>
            <person name="Feldblyum T.V."/>
            <person name="Laub M.T."/>
            <person name="Paulsen I.T."/>
            <person name="Nelson K.E."/>
            <person name="Eisen J.A."/>
            <person name="Heidelberg J.F."/>
            <person name="Alley M.R.K."/>
            <person name="Ohta N."/>
            <person name="Maddock J.R."/>
            <person name="Potocka I."/>
            <person name="Nelson W.C."/>
            <person name="Newton A."/>
            <person name="Stephens C."/>
            <person name="Phadke N.D."/>
            <person name="Ely B."/>
            <person name="DeBoy R.T."/>
            <person name="Dodson R.J."/>
            <person name="Durkin A.S."/>
            <person name="Gwinn M.L."/>
            <person name="Haft D.H."/>
            <person name="Kolonay J.F."/>
            <person name="Smit J."/>
            <person name="Craven M.B."/>
            <person name="Khouri H.M."/>
            <person name="Shetty J."/>
            <person name="Berry K.J."/>
            <person name="Utterback T.R."/>
            <person name="Tran K."/>
            <person name="Wolf A.M."/>
            <person name="Vamathevan J.J."/>
            <person name="Ermolaeva M.D."/>
            <person name="White O."/>
            <person name="Salzberg S.L."/>
            <person name="Venter J.C."/>
            <person name="Shapiro L."/>
            <person name="Fraser C.M."/>
        </authorList>
    </citation>
    <scope>NUCLEOTIDE SEQUENCE [LARGE SCALE GENOMIC DNA]</scope>
    <source>
        <strain>ATCC 19089 / CIP 103742 / CB 15</strain>
    </source>
</reference>
<proteinExistence type="inferred from homology"/>
<gene>
    <name evidence="1" type="primary">anmK</name>
    <name type="ordered locus">CC_1869</name>
</gene>
<feature type="chain" id="PRO_0000249991" description="Anhydro-N-acetylmuramic acid kinase">
    <location>
        <begin position="1"/>
        <end position="371"/>
    </location>
</feature>
<feature type="binding site" evidence="1">
    <location>
        <begin position="9"/>
        <end position="16"/>
    </location>
    <ligand>
        <name>ATP</name>
        <dbReference type="ChEBI" id="CHEBI:30616"/>
    </ligand>
</feature>
<protein>
    <recommendedName>
        <fullName evidence="1">Anhydro-N-acetylmuramic acid kinase</fullName>
        <ecNumber evidence="1">2.7.1.170</ecNumber>
    </recommendedName>
    <alternativeName>
        <fullName evidence="1">AnhMurNAc kinase</fullName>
    </alternativeName>
</protein>
<dbReference type="EC" id="2.7.1.170" evidence="1"/>
<dbReference type="EMBL" id="AE005673">
    <property type="protein sequence ID" value="AAK23844.1"/>
    <property type="status" value="ALT_INIT"/>
    <property type="molecule type" value="Genomic_DNA"/>
</dbReference>
<dbReference type="PIR" id="H87480">
    <property type="entry name" value="H87480"/>
</dbReference>
<dbReference type="RefSeq" id="NP_420676.1">
    <property type="nucleotide sequence ID" value="NC_002696.2"/>
</dbReference>
<dbReference type="RefSeq" id="WP_164513078.1">
    <property type="nucleotide sequence ID" value="NC_002696.2"/>
</dbReference>
<dbReference type="SMR" id="Q9A757"/>
<dbReference type="STRING" id="190650.CC_1869"/>
<dbReference type="EnsemblBacteria" id="AAK23844">
    <property type="protein sequence ID" value="AAK23844"/>
    <property type="gene ID" value="CC_1869"/>
</dbReference>
<dbReference type="KEGG" id="ccr:CC_1869"/>
<dbReference type="PATRIC" id="fig|190650.5.peg.1886"/>
<dbReference type="eggNOG" id="COG2377">
    <property type="taxonomic scope" value="Bacteria"/>
</dbReference>
<dbReference type="HOGENOM" id="CLU_038782_3_0_5"/>
<dbReference type="UniPathway" id="UPA00343"/>
<dbReference type="UniPathway" id="UPA00544"/>
<dbReference type="Proteomes" id="UP000001816">
    <property type="component" value="Chromosome"/>
</dbReference>
<dbReference type="GO" id="GO:0005524">
    <property type="term" value="F:ATP binding"/>
    <property type="evidence" value="ECO:0007669"/>
    <property type="project" value="UniProtKB-UniRule"/>
</dbReference>
<dbReference type="GO" id="GO:0016301">
    <property type="term" value="F:kinase activity"/>
    <property type="evidence" value="ECO:0007669"/>
    <property type="project" value="UniProtKB-KW"/>
</dbReference>
<dbReference type="GO" id="GO:0016773">
    <property type="term" value="F:phosphotransferase activity, alcohol group as acceptor"/>
    <property type="evidence" value="ECO:0007669"/>
    <property type="project" value="UniProtKB-UniRule"/>
</dbReference>
<dbReference type="GO" id="GO:0097175">
    <property type="term" value="P:1,6-anhydro-N-acetyl-beta-muramic acid catabolic process"/>
    <property type="evidence" value="ECO:0007669"/>
    <property type="project" value="UniProtKB-UniRule"/>
</dbReference>
<dbReference type="GO" id="GO:0006040">
    <property type="term" value="P:amino sugar metabolic process"/>
    <property type="evidence" value="ECO:0007669"/>
    <property type="project" value="InterPro"/>
</dbReference>
<dbReference type="GO" id="GO:0009254">
    <property type="term" value="P:peptidoglycan turnover"/>
    <property type="evidence" value="ECO:0007669"/>
    <property type="project" value="UniProtKB-UniRule"/>
</dbReference>
<dbReference type="Gene3D" id="3.30.420.40">
    <property type="match status" value="2"/>
</dbReference>
<dbReference type="HAMAP" id="MF_01270">
    <property type="entry name" value="AnhMurNAc_kinase"/>
    <property type="match status" value="1"/>
</dbReference>
<dbReference type="InterPro" id="IPR005338">
    <property type="entry name" value="Anhydro_N_Ac-Mur_kinase"/>
</dbReference>
<dbReference type="InterPro" id="IPR043129">
    <property type="entry name" value="ATPase_NBD"/>
</dbReference>
<dbReference type="NCBIfam" id="NF007141">
    <property type="entry name" value="PRK09585.1-5"/>
    <property type="match status" value="1"/>
</dbReference>
<dbReference type="PANTHER" id="PTHR30605">
    <property type="entry name" value="ANHYDRO-N-ACETYLMURAMIC ACID KINASE"/>
    <property type="match status" value="1"/>
</dbReference>
<dbReference type="PANTHER" id="PTHR30605:SF0">
    <property type="entry name" value="ANHYDRO-N-ACETYLMURAMIC ACID KINASE"/>
    <property type="match status" value="1"/>
</dbReference>
<dbReference type="Pfam" id="PF03702">
    <property type="entry name" value="AnmK"/>
    <property type="match status" value="1"/>
</dbReference>
<dbReference type="SUPFAM" id="SSF53067">
    <property type="entry name" value="Actin-like ATPase domain"/>
    <property type="match status" value="1"/>
</dbReference>
<organism>
    <name type="scientific">Caulobacter vibrioides (strain ATCC 19089 / CIP 103742 / CB 15)</name>
    <name type="common">Caulobacter crescentus</name>
    <dbReference type="NCBI Taxonomy" id="190650"/>
    <lineage>
        <taxon>Bacteria</taxon>
        <taxon>Pseudomonadati</taxon>
        <taxon>Pseudomonadota</taxon>
        <taxon>Alphaproteobacteria</taxon>
        <taxon>Caulobacterales</taxon>
        <taxon>Caulobacteraceae</taxon>
        <taxon>Caulobacter</taxon>
    </lineage>
</organism>
<sequence>MKILGFMTGTSLDAVDMAVLETDGVEISAFGPAGERKLREATRDLLLKTTDIARAWPRGEPEPVIFEEARRAVADEHFQAAESFLDEHGLSWSDFDLLGVHGQTVLHERPTAQRVGRTVQLLDADRLARLCGRPVAFDFRTADVAVGGEGAPLAPIYHAARARASGLAAPVAALNVGGVANITLIGANGDLLAFDTGPGNGMIDLMLQARGLGRFDEDGRLALAGRVDEAVLAALLDSPYFDAPAPKSLDRYDFSLTPVDHLSAEDAAATLVAFTAEAVFKAFAQSGEAPSALIVCGGGRHNPAIMQTLAARAPVPVKSAEAYGWRGDSIEAEAFAYLAARTAKGLPISFPGTTGVPAPMTGGRIVGLISA</sequence>
<accession>Q9A757</accession>
<comment type="function">
    <text evidence="1">Catalyzes the specific phosphorylation of 1,6-anhydro-N-acetylmuramic acid (anhMurNAc) with the simultaneous cleavage of the 1,6-anhydro ring, generating MurNAc-6-P. Is required for the utilization of anhMurNAc either imported from the medium or derived from its own cell wall murein, and thus plays a role in cell wall recycling.</text>
</comment>
<comment type="catalytic activity">
    <reaction evidence="1">
        <text>1,6-anhydro-N-acetyl-beta-muramate + ATP + H2O = N-acetyl-D-muramate 6-phosphate + ADP + H(+)</text>
        <dbReference type="Rhea" id="RHEA:24952"/>
        <dbReference type="ChEBI" id="CHEBI:15377"/>
        <dbReference type="ChEBI" id="CHEBI:15378"/>
        <dbReference type="ChEBI" id="CHEBI:30616"/>
        <dbReference type="ChEBI" id="CHEBI:58690"/>
        <dbReference type="ChEBI" id="CHEBI:58722"/>
        <dbReference type="ChEBI" id="CHEBI:456216"/>
        <dbReference type="EC" id="2.7.1.170"/>
    </reaction>
</comment>
<comment type="pathway">
    <text evidence="1">Amino-sugar metabolism; 1,6-anhydro-N-acetylmuramate degradation.</text>
</comment>
<comment type="pathway">
    <text evidence="1">Cell wall biogenesis; peptidoglycan recycling.</text>
</comment>
<comment type="similarity">
    <text evidence="1">Belongs to the anhydro-N-acetylmuramic acid kinase family.</text>
</comment>
<comment type="sequence caution" evidence="2">
    <conflict type="erroneous initiation">
        <sequence resource="EMBL-CDS" id="AAK23844"/>
    </conflict>
</comment>
<evidence type="ECO:0000255" key="1">
    <source>
        <dbReference type="HAMAP-Rule" id="MF_01270"/>
    </source>
</evidence>
<evidence type="ECO:0000305" key="2"/>
<keyword id="KW-0067">ATP-binding</keyword>
<keyword id="KW-0119">Carbohydrate metabolism</keyword>
<keyword id="KW-0418">Kinase</keyword>
<keyword id="KW-0547">Nucleotide-binding</keyword>
<keyword id="KW-1185">Reference proteome</keyword>
<keyword id="KW-0808">Transferase</keyword>
<name>ANMK_CAUVC</name>